<proteinExistence type="inferred from homology"/>
<name>RS15_ACICJ</name>
<evidence type="ECO:0000255" key="1">
    <source>
        <dbReference type="HAMAP-Rule" id="MF_01343"/>
    </source>
</evidence>
<evidence type="ECO:0000305" key="2"/>
<accession>A5FVN5</accession>
<gene>
    <name evidence="1" type="primary">rpsO</name>
    <name type="ordered locus">Acry_0442</name>
</gene>
<dbReference type="EMBL" id="CP000697">
    <property type="protein sequence ID" value="ABQ29667.1"/>
    <property type="molecule type" value="Genomic_DNA"/>
</dbReference>
<dbReference type="RefSeq" id="WP_007422287.1">
    <property type="nucleotide sequence ID" value="NC_009484.1"/>
</dbReference>
<dbReference type="SMR" id="A5FVN5"/>
<dbReference type="STRING" id="349163.Acry_0442"/>
<dbReference type="KEGG" id="acr:Acry_0442"/>
<dbReference type="eggNOG" id="COG0184">
    <property type="taxonomic scope" value="Bacteria"/>
</dbReference>
<dbReference type="HOGENOM" id="CLU_148518_0_0_5"/>
<dbReference type="Proteomes" id="UP000000245">
    <property type="component" value="Chromosome"/>
</dbReference>
<dbReference type="GO" id="GO:0022627">
    <property type="term" value="C:cytosolic small ribosomal subunit"/>
    <property type="evidence" value="ECO:0007669"/>
    <property type="project" value="TreeGrafter"/>
</dbReference>
<dbReference type="GO" id="GO:0019843">
    <property type="term" value="F:rRNA binding"/>
    <property type="evidence" value="ECO:0007669"/>
    <property type="project" value="UniProtKB-UniRule"/>
</dbReference>
<dbReference type="GO" id="GO:0003735">
    <property type="term" value="F:structural constituent of ribosome"/>
    <property type="evidence" value="ECO:0007669"/>
    <property type="project" value="InterPro"/>
</dbReference>
<dbReference type="GO" id="GO:0006412">
    <property type="term" value="P:translation"/>
    <property type="evidence" value="ECO:0007669"/>
    <property type="project" value="UniProtKB-UniRule"/>
</dbReference>
<dbReference type="CDD" id="cd00353">
    <property type="entry name" value="Ribosomal_S15p_S13e"/>
    <property type="match status" value="1"/>
</dbReference>
<dbReference type="FunFam" id="1.10.287.10:FF:000002">
    <property type="entry name" value="30S ribosomal protein S15"/>
    <property type="match status" value="1"/>
</dbReference>
<dbReference type="Gene3D" id="6.10.250.3130">
    <property type="match status" value="1"/>
</dbReference>
<dbReference type="Gene3D" id="1.10.287.10">
    <property type="entry name" value="S15/NS1, RNA-binding"/>
    <property type="match status" value="1"/>
</dbReference>
<dbReference type="HAMAP" id="MF_01343_B">
    <property type="entry name" value="Ribosomal_uS15_B"/>
    <property type="match status" value="1"/>
</dbReference>
<dbReference type="InterPro" id="IPR000589">
    <property type="entry name" value="Ribosomal_uS15"/>
</dbReference>
<dbReference type="InterPro" id="IPR005290">
    <property type="entry name" value="Ribosomal_uS15_bac-type"/>
</dbReference>
<dbReference type="InterPro" id="IPR009068">
    <property type="entry name" value="uS15_NS1_RNA-bd_sf"/>
</dbReference>
<dbReference type="NCBIfam" id="TIGR00952">
    <property type="entry name" value="S15_bact"/>
    <property type="match status" value="1"/>
</dbReference>
<dbReference type="PANTHER" id="PTHR23321">
    <property type="entry name" value="RIBOSOMAL PROTEIN S15, BACTERIAL AND ORGANELLAR"/>
    <property type="match status" value="1"/>
</dbReference>
<dbReference type="PANTHER" id="PTHR23321:SF26">
    <property type="entry name" value="SMALL RIBOSOMAL SUBUNIT PROTEIN US15M"/>
    <property type="match status" value="1"/>
</dbReference>
<dbReference type="Pfam" id="PF00312">
    <property type="entry name" value="Ribosomal_S15"/>
    <property type="match status" value="1"/>
</dbReference>
<dbReference type="SMART" id="SM01387">
    <property type="entry name" value="Ribosomal_S15"/>
    <property type="match status" value="1"/>
</dbReference>
<dbReference type="SUPFAM" id="SSF47060">
    <property type="entry name" value="S15/NS1 RNA-binding domain"/>
    <property type="match status" value="1"/>
</dbReference>
<dbReference type="PROSITE" id="PS00362">
    <property type="entry name" value="RIBOSOMAL_S15"/>
    <property type="match status" value="1"/>
</dbReference>
<comment type="function">
    <text evidence="1">One of the primary rRNA binding proteins, it binds directly to 16S rRNA where it helps nucleate assembly of the platform of the 30S subunit by binding and bridging several RNA helices of the 16S rRNA.</text>
</comment>
<comment type="function">
    <text evidence="1">Forms an intersubunit bridge (bridge B4) with the 23S rRNA of the 50S subunit in the ribosome.</text>
</comment>
<comment type="subunit">
    <text evidence="1">Part of the 30S ribosomal subunit. Forms a bridge to the 50S subunit in the 70S ribosome, contacting the 23S rRNA.</text>
</comment>
<comment type="similarity">
    <text evidence="1">Belongs to the universal ribosomal protein uS15 family.</text>
</comment>
<keyword id="KW-1185">Reference proteome</keyword>
<keyword id="KW-0687">Ribonucleoprotein</keyword>
<keyword id="KW-0689">Ribosomal protein</keyword>
<keyword id="KW-0694">RNA-binding</keyword>
<keyword id="KW-0699">rRNA-binding</keyword>
<protein>
    <recommendedName>
        <fullName evidence="1">Small ribosomal subunit protein uS15</fullName>
    </recommendedName>
    <alternativeName>
        <fullName evidence="2">30S ribosomal protein S15</fullName>
    </alternativeName>
</protein>
<reference key="1">
    <citation type="submission" date="2007-05" db="EMBL/GenBank/DDBJ databases">
        <title>Complete sequence of chromosome of Acidiphilium cryptum JF-5.</title>
        <authorList>
            <consortium name="US DOE Joint Genome Institute"/>
            <person name="Copeland A."/>
            <person name="Lucas S."/>
            <person name="Lapidus A."/>
            <person name="Barry K."/>
            <person name="Detter J.C."/>
            <person name="Glavina del Rio T."/>
            <person name="Hammon N."/>
            <person name="Israni S."/>
            <person name="Dalin E."/>
            <person name="Tice H."/>
            <person name="Pitluck S."/>
            <person name="Sims D."/>
            <person name="Brettin T."/>
            <person name="Bruce D."/>
            <person name="Han C."/>
            <person name="Schmutz J."/>
            <person name="Larimer F."/>
            <person name="Land M."/>
            <person name="Hauser L."/>
            <person name="Kyrpides N."/>
            <person name="Kim E."/>
            <person name="Magnuson T."/>
            <person name="Richardson P."/>
        </authorList>
    </citation>
    <scope>NUCLEOTIDE SEQUENCE [LARGE SCALE GENOMIC DNA]</scope>
    <source>
        <strain>JF-5</strain>
    </source>
</reference>
<organism>
    <name type="scientific">Acidiphilium cryptum (strain JF-5)</name>
    <dbReference type="NCBI Taxonomy" id="349163"/>
    <lineage>
        <taxon>Bacteria</taxon>
        <taxon>Pseudomonadati</taxon>
        <taxon>Pseudomonadota</taxon>
        <taxon>Alphaproteobacteria</taxon>
        <taxon>Acetobacterales</taxon>
        <taxon>Acidocellaceae</taxon>
        <taxon>Acidiphilium</taxon>
    </lineage>
</organism>
<sequence>MSITPDRRQELIGEYANKANDTGSPEVQVALLTERIVNLTEHLKTHAKDFHSRRGLLMLVGRRRRLLDYVKRQDVKRYEALIGRLGLRR</sequence>
<feature type="chain" id="PRO_1000054739" description="Small ribosomal subunit protein uS15">
    <location>
        <begin position="1"/>
        <end position="89"/>
    </location>
</feature>